<evidence type="ECO:0000250" key="1"/>
<evidence type="ECO:0000250" key="2">
    <source>
        <dbReference type="UniProtKB" id="Q9BHM6"/>
    </source>
</evidence>
<evidence type="ECO:0000255" key="3"/>
<evidence type="ECO:0000269" key="4">
    <source>
    </source>
</evidence>
<evidence type="ECO:0000303" key="5">
    <source>
    </source>
</evidence>
<evidence type="ECO:0000312" key="6">
    <source>
        <dbReference type="EMBL" id="BAB92087.1"/>
    </source>
</evidence>
<keyword id="KW-0520">NAD</keyword>
<keyword id="KW-0560">Oxidoreductase</keyword>
<dbReference type="EC" id="1.5.1.11" evidence="2"/>
<dbReference type="EMBL" id="AB085183">
    <property type="protein sequence ID" value="BAB92087.1"/>
    <property type="molecule type" value="mRNA"/>
</dbReference>
<dbReference type="SMR" id="Q8N0P0"/>
<dbReference type="OrthoDB" id="6058913at2759"/>
<dbReference type="GO" id="GO:0047830">
    <property type="term" value="F:D-octopine dehydrogenase activity"/>
    <property type="evidence" value="ECO:0007669"/>
    <property type="project" value="UniProtKB-EC"/>
</dbReference>
<dbReference type="Gene3D" id="1.10.1040.10">
    <property type="entry name" value="N-(1-d-carboxylethyl)-l-norvaline Dehydrogenase, domain 2"/>
    <property type="match status" value="1"/>
</dbReference>
<dbReference type="Gene3D" id="3.40.50.720">
    <property type="entry name" value="NAD(P)-binding Rossmann-like Domain"/>
    <property type="match status" value="1"/>
</dbReference>
<dbReference type="InterPro" id="IPR008927">
    <property type="entry name" value="6-PGluconate_DH-like_C_sf"/>
</dbReference>
<dbReference type="InterPro" id="IPR013328">
    <property type="entry name" value="6PGD_dom2"/>
</dbReference>
<dbReference type="InterPro" id="IPR036291">
    <property type="entry name" value="NAD(P)-bd_dom_sf"/>
</dbReference>
<dbReference type="InterPro" id="IPR051729">
    <property type="entry name" value="Opine/Lysopine_DH"/>
</dbReference>
<dbReference type="InterPro" id="IPR003421">
    <property type="entry name" value="Opine_DH"/>
</dbReference>
<dbReference type="PANTHER" id="PTHR38015">
    <property type="entry name" value="BLR6086 PROTEIN"/>
    <property type="match status" value="1"/>
</dbReference>
<dbReference type="PANTHER" id="PTHR38015:SF1">
    <property type="entry name" value="OPINE DEHYDROGENASE DOMAIN-CONTAINING PROTEIN"/>
    <property type="match status" value="1"/>
</dbReference>
<dbReference type="Pfam" id="PF02317">
    <property type="entry name" value="Octopine_DH"/>
    <property type="match status" value="1"/>
</dbReference>
<dbReference type="SUPFAM" id="SSF48179">
    <property type="entry name" value="6-phosphogluconate dehydrogenase C-terminal domain-like"/>
    <property type="match status" value="1"/>
</dbReference>
<dbReference type="SUPFAM" id="SSF51735">
    <property type="entry name" value="NAD(P)-binding Rossmann-fold domains"/>
    <property type="match status" value="1"/>
</dbReference>
<comment type="function">
    <text evidence="2">Catalyzes the reverse reaction of octopine dehydrogenation. Acts on L-arginine in preference to other substrates (By similarity).</text>
</comment>
<comment type="catalytic activity">
    <reaction evidence="2">
        <text>D-octopine + NAD(+) + H2O = L-arginine + pyruvate + NADH + H(+)</text>
        <dbReference type="Rhea" id="RHEA:16285"/>
        <dbReference type="ChEBI" id="CHEBI:15361"/>
        <dbReference type="ChEBI" id="CHEBI:15377"/>
        <dbReference type="ChEBI" id="CHEBI:15378"/>
        <dbReference type="ChEBI" id="CHEBI:32682"/>
        <dbReference type="ChEBI" id="CHEBI:57520"/>
        <dbReference type="ChEBI" id="CHEBI:57540"/>
        <dbReference type="ChEBI" id="CHEBI:57945"/>
        <dbReference type="EC" id="1.5.1.11"/>
    </reaction>
</comment>
<comment type="similarity">
    <text evidence="3">Belongs to the lysopine/nopaline/octopine/opine/vitopine dehydrogenases family.</text>
</comment>
<feature type="chain" id="PRO_0000414625" description="Octopine dehydrogenase">
    <location>
        <begin position="1"/>
        <end position="400"/>
    </location>
</feature>
<feature type="active site" evidence="2">
    <location>
        <position position="212"/>
    </location>
</feature>
<feature type="binding site" evidence="2">
    <location>
        <begin position="10"/>
        <end position="13"/>
    </location>
    <ligand>
        <name>NADH</name>
        <dbReference type="ChEBI" id="CHEBI:57945"/>
    </ligand>
</feature>
<feature type="binding site" evidence="2">
    <location>
        <begin position="35"/>
        <end position="38"/>
    </location>
    <ligand>
        <name>NADH</name>
        <dbReference type="ChEBI" id="CHEBI:57945"/>
    </ligand>
</feature>
<feature type="binding site" evidence="2">
    <location>
        <position position="118"/>
    </location>
    <ligand>
        <name>pyruvate</name>
        <dbReference type="ChEBI" id="CHEBI:15361"/>
    </ligand>
</feature>
<feature type="binding site" evidence="1">
    <location>
        <position position="118"/>
    </location>
    <ligand>
        <name>substrate</name>
    </ligand>
</feature>
<feature type="binding site" evidence="2">
    <location>
        <position position="143"/>
    </location>
    <ligand>
        <name>pyruvate</name>
        <dbReference type="ChEBI" id="CHEBI:15361"/>
    </ligand>
</feature>
<feature type="binding site" evidence="1">
    <location>
        <position position="148"/>
    </location>
    <ligand>
        <name>NAD(+)</name>
        <dbReference type="ChEBI" id="CHEBI:57540"/>
    </ligand>
</feature>
<feature type="binding site" evidence="2">
    <location>
        <position position="206"/>
    </location>
    <ligand>
        <name>L-arginine</name>
        <dbReference type="ChEBI" id="CHEBI:32682"/>
    </ligand>
</feature>
<feature type="binding site" evidence="2">
    <location>
        <position position="212"/>
    </location>
    <ligand>
        <name>pyruvate</name>
        <dbReference type="ChEBI" id="CHEBI:15361"/>
    </ligand>
</feature>
<feature type="binding site" evidence="1">
    <location>
        <position position="324"/>
    </location>
    <ligand>
        <name>NAD(+)</name>
        <dbReference type="ChEBI" id="CHEBI:57540"/>
    </ligand>
</feature>
<reference evidence="6" key="1">
    <citation type="journal article" date="2004" name="Mar. Biotechnol.">
        <title>Complementary DNA cloning and molecular evolution of opine dehydrogenases in some marine invertebrates.</title>
        <authorList>
            <person name="Kimura T."/>
            <person name="Nakano T."/>
            <person name="Yamaguchi T."/>
            <person name="Sato M."/>
            <person name="Ogawa T."/>
            <person name="Muramoto K."/>
            <person name="Yokoyama T."/>
            <person name="Kan-No N."/>
            <person name="Nagahisa E."/>
            <person name="Janssen F."/>
            <person name="Grieshaber M.K."/>
        </authorList>
    </citation>
    <scope>NUCLEOTIDE SEQUENCE [MRNA]</scope>
    <source>
        <tissue evidence="4">Adductor muscle</tissue>
    </source>
</reference>
<organism>
    <name type="scientific">Mizuhopecten yessoensis</name>
    <name type="common">Japanese scallop</name>
    <name type="synonym">Patinopecten yessoensis</name>
    <dbReference type="NCBI Taxonomy" id="6573"/>
    <lineage>
        <taxon>Eukaryota</taxon>
        <taxon>Metazoa</taxon>
        <taxon>Spiralia</taxon>
        <taxon>Lophotrochozoa</taxon>
        <taxon>Mollusca</taxon>
        <taxon>Bivalvia</taxon>
        <taxon>Autobranchia</taxon>
        <taxon>Pteriomorphia</taxon>
        <taxon>Pectinida</taxon>
        <taxon>Pectinoidea</taxon>
        <taxon>Pectinidae</taxon>
        <taxon>Mizuhopecten</taxon>
    </lineage>
</organism>
<gene>
    <name evidence="6" type="primary">odh</name>
</gene>
<sequence>MTLKVCVCGGGNGAHTLSGLAASRDGVEVRVLTLFADEAERWTKALGADELTVIVNEKDGTQTEVKSRPKVITKDPQVAITGADVVILTVPAFAHEGYFQAMAPYVQDSALIVGLPSQAGFEFQCRDILGDKAAAVSMMSFETLPWACRIKEFGRKVEVLGTKSVLAASLIKGTAETVDPLSTLQKLHGAEPVFRLAKHFLEMLIMSYSFVHPAILYGRWGSWDGNPVSEAPLFYQGIDQATADMLTACSDECKAVGNAIMAACPGNDLSDVKDIYQWYLEYYHEDIQDDHDLYHAITTNKSYKGLVHPVKTVDGGVAPDFGNRYLTEDIPMGMIVFKGVAIAAGVPIPNNDKLITWAQEKIGKVYLVDGALTGKDVATTRCPQRYGFNTLNAILTGKKE</sequence>
<name>OCDH_MIZYE</name>
<accession>Q8N0P0</accession>
<proteinExistence type="evidence at transcript level"/>
<protein>
    <recommendedName>
        <fullName evidence="6">Octopine dehydrogenase</fullName>
        <shortName evidence="5">OcDH</shortName>
        <ecNumber evidence="2">1.5.1.11</ecNumber>
    </recommendedName>
</protein>